<gene>
    <name type="primary">Surf1</name>
    <name type="ORF">CG9943</name>
</gene>
<protein>
    <recommendedName>
        <fullName>SURF1-like protein</fullName>
    </recommendedName>
</protein>
<reference key="1">
    <citation type="journal article" date="1999" name="FEBS Lett.">
        <title>Sequence conservation from human to prokaryotes of Surf1, a protein involved in cytochrome c oxidase assembly, deficient in Leigh syndrome.</title>
        <authorList>
            <person name="Poyau A."/>
            <person name="Buchet K."/>
            <person name="Godinot C."/>
        </authorList>
    </citation>
    <scope>NUCLEOTIDE SEQUENCE [MRNA]</scope>
</reference>
<reference key="2">
    <citation type="journal article" date="2000" name="Science">
        <title>The genome sequence of Drosophila melanogaster.</title>
        <authorList>
            <person name="Adams M.D."/>
            <person name="Celniker S.E."/>
            <person name="Holt R.A."/>
            <person name="Evans C.A."/>
            <person name="Gocayne J.D."/>
            <person name="Amanatides P.G."/>
            <person name="Scherer S.E."/>
            <person name="Li P.W."/>
            <person name="Hoskins R.A."/>
            <person name="Galle R.F."/>
            <person name="George R.A."/>
            <person name="Lewis S.E."/>
            <person name="Richards S."/>
            <person name="Ashburner M."/>
            <person name="Henderson S.N."/>
            <person name="Sutton G.G."/>
            <person name="Wortman J.R."/>
            <person name="Yandell M.D."/>
            <person name="Zhang Q."/>
            <person name="Chen L.X."/>
            <person name="Brandon R.C."/>
            <person name="Rogers Y.-H.C."/>
            <person name="Blazej R.G."/>
            <person name="Champe M."/>
            <person name="Pfeiffer B.D."/>
            <person name="Wan K.H."/>
            <person name="Doyle C."/>
            <person name="Baxter E.G."/>
            <person name="Helt G."/>
            <person name="Nelson C.R."/>
            <person name="Miklos G.L.G."/>
            <person name="Abril J.F."/>
            <person name="Agbayani A."/>
            <person name="An H.-J."/>
            <person name="Andrews-Pfannkoch C."/>
            <person name="Baldwin D."/>
            <person name="Ballew R.M."/>
            <person name="Basu A."/>
            <person name="Baxendale J."/>
            <person name="Bayraktaroglu L."/>
            <person name="Beasley E.M."/>
            <person name="Beeson K.Y."/>
            <person name="Benos P.V."/>
            <person name="Berman B.P."/>
            <person name="Bhandari D."/>
            <person name="Bolshakov S."/>
            <person name="Borkova D."/>
            <person name="Botchan M.R."/>
            <person name="Bouck J."/>
            <person name="Brokstein P."/>
            <person name="Brottier P."/>
            <person name="Burtis K.C."/>
            <person name="Busam D.A."/>
            <person name="Butler H."/>
            <person name="Cadieu E."/>
            <person name="Center A."/>
            <person name="Chandra I."/>
            <person name="Cherry J.M."/>
            <person name="Cawley S."/>
            <person name="Dahlke C."/>
            <person name="Davenport L.B."/>
            <person name="Davies P."/>
            <person name="de Pablos B."/>
            <person name="Delcher A."/>
            <person name="Deng Z."/>
            <person name="Mays A.D."/>
            <person name="Dew I."/>
            <person name="Dietz S.M."/>
            <person name="Dodson K."/>
            <person name="Doup L.E."/>
            <person name="Downes M."/>
            <person name="Dugan-Rocha S."/>
            <person name="Dunkov B.C."/>
            <person name="Dunn P."/>
            <person name="Durbin K.J."/>
            <person name="Evangelista C.C."/>
            <person name="Ferraz C."/>
            <person name="Ferriera S."/>
            <person name="Fleischmann W."/>
            <person name="Fosler C."/>
            <person name="Gabrielian A.E."/>
            <person name="Garg N.S."/>
            <person name="Gelbart W.M."/>
            <person name="Glasser K."/>
            <person name="Glodek A."/>
            <person name="Gong F."/>
            <person name="Gorrell J.H."/>
            <person name="Gu Z."/>
            <person name="Guan P."/>
            <person name="Harris M."/>
            <person name="Harris N.L."/>
            <person name="Harvey D.A."/>
            <person name="Heiman T.J."/>
            <person name="Hernandez J.R."/>
            <person name="Houck J."/>
            <person name="Hostin D."/>
            <person name="Houston K.A."/>
            <person name="Howland T.J."/>
            <person name="Wei M.-H."/>
            <person name="Ibegwam C."/>
            <person name="Jalali M."/>
            <person name="Kalush F."/>
            <person name="Karpen G.H."/>
            <person name="Ke Z."/>
            <person name="Kennison J.A."/>
            <person name="Ketchum K.A."/>
            <person name="Kimmel B.E."/>
            <person name="Kodira C.D."/>
            <person name="Kraft C.L."/>
            <person name="Kravitz S."/>
            <person name="Kulp D."/>
            <person name="Lai Z."/>
            <person name="Lasko P."/>
            <person name="Lei Y."/>
            <person name="Levitsky A.A."/>
            <person name="Li J.H."/>
            <person name="Li Z."/>
            <person name="Liang Y."/>
            <person name="Lin X."/>
            <person name="Liu X."/>
            <person name="Mattei B."/>
            <person name="McIntosh T.C."/>
            <person name="McLeod M.P."/>
            <person name="McPherson D."/>
            <person name="Merkulov G."/>
            <person name="Milshina N.V."/>
            <person name="Mobarry C."/>
            <person name="Morris J."/>
            <person name="Moshrefi A."/>
            <person name="Mount S.M."/>
            <person name="Moy M."/>
            <person name="Murphy B."/>
            <person name="Murphy L."/>
            <person name="Muzny D.M."/>
            <person name="Nelson D.L."/>
            <person name="Nelson D.R."/>
            <person name="Nelson K.A."/>
            <person name="Nixon K."/>
            <person name="Nusskern D.R."/>
            <person name="Pacleb J.M."/>
            <person name="Palazzolo M."/>
            <person name="Pittman G.S."/>
            <person name="Pan S."/>
            <person name="Pollard J."/>
            <person name="Puri V."/>
            <person name="Reese M.G."/>
            <person name="Reinert K."/>
            <person name="Remington K."/>
            <person name="Saunders R.D.C."/>
            <person name="Scheeler F."/>
            <person name="Shen H."/>
            <person name="Shue B.C."/>
            <person name="Siden-Kiamos I."/>
            <person name="Simpson M."/>
            <person name="Skupski M.P."/>
            <person name="Smith T.J."/>
            <person name="Spier E."/>
            <person name="Spradling A.C."/>
            <person name="Stapleton M."/>
            <person name="Strong R."/>
            <person name="Sun E."/>
            <person name="Svirskas R."/>
            <person name="Tector C."/>
            <person name="Turner R."/>
            <person name="Venter E."/>
            <person name="Wang A.H."/>
            <person name="Wang X."/>
            <person name="Wang Z.-Y."/>
            <person name="Wassarman D.A."/>
            <person name="Weinstock G.M."/>
            <person name="Weissenbach J."/>
            <person name="Williams S.M."/>
            <person name="Woodage T."/>
            <person name="Worley K.C."/>
            <person name="Wu D."/>
            <person name="Yang S."/>
            <person name="Yao Q.A."/>
            <person name="Ye J."/>
            <person name="Yeh R.-F."/>
            <person name="Zaveri J.S."/>
            <person name="Zhan M."/>
            <person name="Zhang G."/>
            <person name="Zhao Q."/>
            <person name="Zheng L."/>
            <person name="Zheng X.H."/>
            <person name="Zhong F.N."/>
            <person name="Zhong W."/>
            <person name="Zhou X."/>
            <person name="Zhu S.C."/>
            <person name="Zhu X."/>
            <person name="Smith H.O."/>
            <person name="Gibbs R.A."/>
            <person name="Myers E.W."/>
            <person name="Rubin G.M."/>
            <person name="Venter J.C."/>
        </authorList>
    </citation>
    <scope>NUCLEOTIDE SEQUENCE [LARGE SCALE GENOMIC DNA]</scope>
    <source>
        <strain>Berkeley</strain>
    </source>
</reference>
<reference key="3">
    <citation type="journal article" date="2002" name="Genome Biol.">
        <title>Annotation of the Drosophila melanogaster euchromatic genome: a systematic review.</title>
        <authorList>
            <person name="Misra S."/>
            <person name="Crosby M.A."/>
            <person name="Mungall C.J."/>
            <person name="Matthews B.B."/>
            <person name="Campbell K.S."/>
            <person name="Hradecky P."/>
            <person name="Huang Y."/>
            <person name="Kaminker J.S."/>
            <person name="Millburn G.H."/>
            <person name="Prochnik S.E."/>
            <person name="Smith C.D."/>
            <person name="Tupy J.L."/>
            <person name="Whitfield E.J."/>
            <person name="Bayraktaroglu L."/>
            <person name="Berman B.P."/>
            <person name="Bettencourt B.R."/>
            <person name="Celniker S.E."/>
            <person name="de Grey A.D.N.J."/>
            <person name="Drysdale R.A."/>
            <person name="Harris N.L."/>
            <person name="Richter J."/>
            <person name="Russo S."/>
            <person name="Schroeder A.J."/>
            <person name="Shu S.Q."/>
            <person name="Stapleton M."/>
            <person name="Yamada C."/>
            <person name="Ashburner M."/>
            <person name="Gelbart W.M."/>
            <person name="Rubin G.M."/>
            <person name="Lewis S.E."/>
        </authorList>
    </citation>
    <scope>GENOME REANNOTATION</scope>
    <source>
        <strain>Berkeley</strain>
    </source>
</reference>
<reference key="4">
    <citation type="journal article" date="2002" name="Genome Biol.">
        <title>A Drosophila full-length cDNA resource.</title>
        <authorList>
            <person name="Stapleton M."/>
            <person name="Carlson J.W."/>
            <person name="Brokstein P."/>
            <person name="Yu C."/>
            <person name="Champe M."/>
            <person name="George R.A."/>
            <person name="Guarin H."/>
            <person name="Kronmiller B."/>
            <person name="Pacleb J.M."/>
            <person name="Park S."/>
            <person name="Wan K.H."/>
            <person name="Rubin G.M."/>
            <person name="Celniker S.E."/>
        </authorList>
    </citation>
    <scope>NUCLEOTIDE SEQUENCE [LARGE SCALE MRNA] OF 99-300</scope>
    <source>
        <strain>Berkeley</strain>
        <tissue>Head</tissue>
    </source>
</reference>
<reference key="5">
    <citation type="journal article" date="2006" name="Genetics">
        <title>Post-transcriptional silencing and functional characterization of the Drosophila melanogaster homolog of human Surf1.</title>
        <authorList>
            <person name="Zordan M.A."/>
            <person name="Cisotto P."/>
            <person name="Benna C."/>
            <person name="Agostino A."/>
            <person name="Rizzo G."/>
            <person name="Piccin A."/>
            <person name="Pegoraro M."/>
            <person name="Sandrelli F."/>
            <person name="Perini G."/>
            <person name="Tognon G."/>
            <person name="De Caro R."/>
            <person name="Peron S."/>
            <person name="Kronnie T.T."/>
            <person name="Megighian A."/>
            <person name="Reggiani C."/>
            <person name="Zeviani M."/>
            <person name="Costa R."/>
        </authorList>
    </citation>
    <scope>FUNCTION</scope>
    <scope>DISRUPTION PHENOTYPE</scope>
</reference>
<reference key="6">
    <citation type="journal article" date="2014" name="J. Biol. Chem.">
        <title>Leigh syndrome in Drosophila melanogaster: morphological and biochemical characterization of Surf1 post-transcriptional silencing.</title>
        <authorList>
            <person name="Da-Re C."/>
            <person name="von Stockum S."/>
            <person name="Biscontin A."/>
            <person name="Millino C."/>
            <person name="Cisotto P."/>
            <person name="Zordan M.A."/>
            <person name="Zeviani M."/>
            <person name="Bernardi P."/>
            <person name="De Pitta C."/>
            <person name="Costa R."/>
        </authorList>
    </citation>
    <scope>FUNCTION</scope>
    <scope>DISRUPTION PHENOTYPE</scope>
</reference>
<proteinExistence type="evidence at transcript level"/>
<dbReference type="EMBL" id="AF182954">
    <property type="protein sequence ID" value="AAF19610.1"/>
    <property type="molecule type" value="mRNA"/>
</dbReference>
<dbReference type="EMBL" id="AE014296">
    <property type="protein sequence ID" value="AAF50632.2"/>
    <property type="molecule type" value="Genomic_DNA"/>
</dbReference>
<dbReference type="EMBL" id="AY118815">
    <property type="protein sequence ID" value="AAM50675.1"/>
    <property type="status" value="ALT_INIT"/>
    <property type="molecule type" value="mRNA"/>
</dbReference>
<dbReference type="RefSeq" id="NP_524758.1">
    <property type="nucleotide sequence ID" value="NM_080019.3"/>
</dbReference>
<dbReference type="SMR" id="Q9U4F3"/>
<dbReference type="BioGRID" id="69086">
    <property type="interactions" value="3"/>
</dbReference>
<dbReference type="FunCoup" id="Q9U4F3">
    <property type="interactions" value="1033"/>
</dbReference>
<dbReference type="IntAct" id="Q9U4F3">
    <property type="interactions" value="18"/>
</dbReference>
<dbReference type="STRING" id="7227.FBpp0076607"/>
<dbReference type="PaxDb" id="7227-FBpp0076607"/>
<dbReference type="DNASU" id="44498"/>
<dbReference type="EnsemblMetazoa" id="FBtr0076897">
    <property type="protein sequence ID" value="FBpp0076607"/>
    <property type="gene ID" value="FBgn0029117"/>
</dbReference>
<dbReference type="GeneID" id="44498"/>
<dbReference type="KEGG" id="dme:Dmel_CG9943"/>
<dbReference type="AGR" id="FB:FBgn0029117"/>
<dbReference type="CTD" id="6834"/>
<dbReference type="FlyBase" id="FBgn0029117">
    <property type="gene designation" value="Surf1"/>
</dbReference>
<dbReference type="VEuPathDB" id="VectorBase:FBgn0029117"/>
<dbReference type="eggNOG" id="KOG1563">
    <property type="taxonomic scope" value="Eukaryota"/>
</dbReference>
<dbReference type="GeneTree" id="ENSGT00530000064194"/>
<dbReference type="HOGENOM" id="CLU_047737_4_0_1"/>
<dbReference type="InParanoid" id="Q9U4F3"/>
<dbReference type="OMA" id="WYSRDVA"/>
<dbReference type="OrthoDB" id="10040024at2759"/>
<dbReference type="PhylomeDB" id="Q9U4F3"/>
<dbReference type="Reactome" id="R-DME-9864848">
    <property type="pathway name" value="Complex IV assembly"/>
</dbReference>
<dbReference type="BioGRID-ORCS" id="44498">
    <property type="hits" value="0 hits in 1 CRISPR screen"/>
</dbReference>
<dbReference type="GenomeRNAi" id="44498"/>
<dbReference type="PRO" id="PR:Q9U4F3"/>
<dbReference type="Proteomes" id="UP000000803">
    <property type="component" value="Chromosome 3L"/>
</dbReference>
<dbReference type="Bgee" id="FBgn0029117">
    <property type="expression patterns" value="Expressed in adult anterior midgut class I enteroendocrine cell in adult midgut (Drosophila) and 61 other cell types or tissues"/>
</dbReference>
<dbReference type="ExpressionAtlas" id="Q9U4F3">
    <property type="expression patterns" value="baseline and differential"/>
</dbReference>
<dbReference type="GO" id="GO:0005743">
    <property type="term" value="C:mitochondrial inner membrane"/>
    <property type="evidence" value="ECO:0000250"/>
    <property type="project" value="UniProtKB"/>
</dbReference>
<dbReference type="GO" id="GO:0005739">
    <property type="term" value="C:mitochondrion"/>
    <property type="evidence" value="ECO:0000318"/>
    <property type="project" value="GO_Central"/>
</dbReference>
<dbReference type="GO" id="GO:0002168">
    <property type="term" value="P:instar larval development"/>
    <property type="evidence" value="ECO:0000315"/>
    <property type="project" value="FlyBase"/>
</dbReference>
<dbReference type="GO" id="GO:0033617">
    <property type="term" value="P:mitochondrial cytochrome c oxidase assembly"/>
    <property type="evidence" value="ECO:0000315"/>
    <property type="project" value="UniProtKB"/>
</dbReference>
<dbReference type="GO" id="GO:0042331">
    <property type="term" value="P:phototaxis"/>
    <property type="evidence" value="ECO:0000315"/>
    <property type="project" value="FlyBase"/>
</dbReference>
<dbReference type="GO" id="GO:0007632">
    <property type="term" value="P:visual behavior"/>
    <property type="evidence" value="ECO:0000315"/>
    <property type="project" value="FlyBase"/>
</dbReference>
<dbReference type="CDD" id="cd06662">
    <property type="entry name" value="SURF1"/>
    <property type="match status" value="1"/>
</dbReference>
<dbReference type="InterPro" id="IPR002994">
    <property type="entry name" value="Surf1/Shy1"/>
</dbReference>
<dbReference type="InterPro" id="IPR045214">
    <property type="entry name" value="Surf1/Surf4"/>
</dbReference>
<dbReference type="PANTHER" id="PTHR23427">
    <property type="entry name" value="SURFEIT LOCUS PROTEIN"/>
    <property type="match status" value="1"/>
</dbReference>
<dbReference type="PANTHER" id="PTHR23427:SF2">
    <property type="entry name" value="SURFEIT LOCUS PROTEIN 1"/>
    <property type="match status" value="1"/>
</dbReference>
<dbReference type="Pfam" id="PF02104">
    <property type="entry name" value="SURF1"/>
    <property type="match status" value="1"/>
</dbReference>
<dbReference type="PROSITE" id="PS50895">
    <property type="entry name" value="SURF1"/>
    <property type="match status" value="1"/>
</dbReference>
<sequence length="300" mass="34064">MIRLGNQMCRQVAFNIQTVFRNPGTANNPRLITRKMTQQRPPVNWTTSIPNQAAKDKEKIAPLGWFLLLIPATTFGLGCWQVKRKIWKEQLIKDLNKQLSTAPVALPDDLTDLAQMEYRLVKIRGRFLHDKEMRLGPRSLIRPDGVETQGGLFSQRDSGNGYLIVTPFQLADRDDIVLVNRGWVSRKQVEPETRPLGQQQAEVELTAVVRKGEARPQFTPDHKGNVYLYRDLARMCAATGAAPVFLDAVYDPQTAAHAPIGGQTRVTLRNDHLSYLVTWFSLSAATSFLWYRQIVKRIPF</sequence>
<feature type="chain" id="PRO_0000215657" description="SURF1-like protein">
    <location>
        <begin position="1"/>
        <end position="300"/>
    </location>
</feature>
<feature type="transmembrane region" description="Helical" evidence="2">
    <location>
        <begin position="60"/>
        <end position="82"/>
    </location>
</feature>
<feature type="transmembrane region" description="Helical" evidence="2">
    <location>
        <begin position="271"/>
        <end position="291"/>
    </location>
</feature>
<keyword id="KW-0472">Membrane</keyword>
<keyword id="KW-0496">Mitochondrion</keyword>
<keyword id="KW-0999">Mitochondrion inner membrane</keyword>
<keyword id="KW-1185">Reference proteome</keyword>
<keyword id="KW-0812">Transmembrane</keyword>
<keyword id="KW-1133">Transmembrane helix</keyword>
<evidence type="ECO:0000250" key="1">
    <source>
        <dbReference type="UniProtKB" id="P09925"/>
    </source>
</evidence>
<evidence type="ECO:0000255" key="2"/>
<evidence type="ECO:0000269" key="3">
    <source>
    </source>
</evidence>
<evidence type="ECO:0000269" key="4">
    <source>
    </source>
</evidence>
<evidence type="ECO:0000305" key="5"/>
<organism>
    <name type="scientific">Drosophila melanogaster</name>
    <name type="common">Fruit fly</name>
    <dbReference type="NCBI Taxonomy" id="7227"/>
    <lineage>
        <taxon>Eukaryota</taxon>
        <taxon>Metazoa</taxon>
        <taxon>Ecdysozoa</taxon>
        <taxon>Arthropoda</taxon>
        <taxon>Hexapoda</taxon>
        <taxon>Insecta</taxon>
        <taxon>Pterygota</taxon>
        <taxon>Neoptera</taxon>
        <taxon>Endopterygota</taxon>
        <taxon>Diptera</taxon>
        <taxon>Brachycera</taxon>
        <taxon>Muscomorpha</taxon>
        <taxon>Ephydroidea</taxon>
        <taxon>Drosophilidae</taxon>
        <taxon>Drosophila</taxon>
        <taxon>Sophophora</taxon>
    </lineage>
</organism>
<accession>Q9U4F3</accession>
<accession>Q8MSH4</accession>
<accession>Q9VRZ8</accession>
<name>SURF1_DROME</name>
<comment type="function">
    <text evidence="3 4">Probably involved in the biogenesis of the COX complex.</text>
</comment>
<comment type="subcellular location">
    <subcellularLocation>
        <location evidence="1">Mitochondrion inner membrane</location>
        <topology evidence="2">Multi-pass membrane protein</topology>
    </subcellularLocation>
</comment>
<comment type="disruption phenotype">
    <text evidence="3 4">Lethal at larval stage (PubMed:16172499). Larvae show reduced locomotor speed and response to light (PubMed:16172499). Results in smaller muscle fibers with mitochondria defects (PubMed:16172499). RNAi-mediated knockdown is lethal at larval stage (PubMed:25164807). RNAi-mediated knockdown in the developing CNS, in the eye and antenna disk from early larval stages shows increased lifespan with reduction of COX activity, increased succinate dehydrogenase (SDH) activity, reduced locomotor speed and response to light (PubMed:16172499, PubMed:25164807). RNAi-mediated knockdown in mesodermal derivatives from early embryonic stages to pupal metamorphosis is lethal at pupal stage with muscles showing enlarged and disorganized mitochondria and reduced activity of all mitochondrial respiratory chain complexes (PubMed:25164807).</text>
</comment>
<comment type="similarity">
    <text evidence="5">Belongs to the SURF1 family.</text>
</comment>
<comment type="sequence caution" evidence="5">
    <conflict type="erroneous initiation">
        <sequence resource="EMBL-CDS" id="AAM50675"/>
    </conflict>
</comment>